<accession>Q02AX2</accession>
<reference key="1">
    <citation type="journal article" date="2009" name="Appl. Environ. Microbiol.">
        <title>Three genomes from the phylum Acidobacteria provide insight into the lifestyles of these microorganisms in soils.</title>
        <authorList>
            <person name="Ward N.L."/>
            <person name="Challacombe J.F."/>
            <person name="Janssen P.H."/>
            <person name="Henrissat B."/>
            <person name="Coutinho P.M."/>
            <person name="Wu M."/>
            <person name="Xie G."/>
            <person name="Haft D.H."/>
            <person name="Sait M."/>
            <person name="Badger J."/>
            <person name="Barabote R.D."/>
            <person name="Bradley B."/>
            <person name="Brettin T.S."/>
            <person name="Brinkac L.M."/>
            <person name="Bruce D."/>
            <person name="Creasy T."/>
            <person name="Daugherty S.C."/>
            <person name="Davidsen T.M."/>
            <person name="DeBoy R.T."/>
            <person name="Detter J.C."/>
            <person name="Dodson R.J."/>
            <person name="Durkin A.S."/>
            <person name="Ganapathy A."/>
            <person name="Gwinn-Giglio M."/>
            <person name="Han C.S."/>
            <person name="Khouri H."/>
            <person name="Kiss H."/>
            <person name="Kothari S.P."/>
            <person name="Madupu R."/>
            <person name="Nelson K.E."/>
            <person name="Nelson W.C."/>
            <person name="Paulsen I."/>
            <person name="Penn K."/>
            <person name="Ren Q."/>
            <person name="Rosovitz M.J."/>
            <person name="Selengut J.D."/>
            <person name="Shrivastava S."/>
            <person name="Sullivan S.A."/>
            <person name="Tapia R."/>
            <person name="Thompson L.S."/>
            <person name="Watkins K.L."/>
            <person name="Yang Q."/>
            <person name="Yu C."/>
            <person name="Zafar N."/>
            <person name="Zhou L."/>
            <person name="Kuske C.R."/>
        </authorList>
    </citation>
    <scope>NUCLEOTIDE SEQUENCE [LARGE SCALE GENOMIC DNA]</scope>
    <source>
        <strain>Ellin6076</strain>
    </source>
</reference>
<proteinExistence type="inferred from homology"/>
<name>NRDR_SOLUE</name>
<comment type="function">
    <text evidence="1">Negatively regulates transcription of bacterial ribonucleotide reductase nrd genes and operons by binding to NrdR-boxes.</text>
</comment>
<comment type="cofactor">
    <cofactor evidence="1">
        <name>Zn(2+)</name>
        <dbReference type="ChEBI" id="CHEBI:29105"/>
    </cofactor>
    <text evidence="1">Binds 1 zinc ion.</text>
</comment>
<comment type="similarity">
    <text evidence="1">Belongs to the NrdR family.</text>
</comment>
<dbReference type="EMBL" id="CP000473">
    <property type="protein sequence ID" value="ABJ81794.1"/>
    <property type="molecule type" value="Genomic_DNA"/>
</dbReference>
<dbReference type="SMR" id="Q02AX2"/>
<dbReference type="FunCoup" id="Q02AX2">
    <property type="interactions" value="318"/>
</dbReference>
<dbReference type="STRING" id="234267.Acid_0795"/>
<dbReference type="KEGG" id="sus:Acid_0795"/>
<dbReference type="eggNOG" id="COG1327">
    <property type="taxonomic scope" value="Bacteria"/>
</dbReference>
<dbReference type="HOGENOM" id="CLU_108412_0_0_0"/>
<dbReference type="InParanoid" id="Q02AX2"/>
<dbReference type="OrthoDB" id="9807461at2"/>
<dbReference type="GO" id="GO:0005524">
    <property type="term" value="F:ATP binding"/>
    <property type="evidence" value="ECO:0007669"/>
    <property type="project" value="UniProtKB-KW"/>
</dbReference>
<dbReference type="GO" id="GO:0003677">
    <property type="term" value="F:DNA binding"/>
    <property type="evidence" value="ECO:0007669"/>
    <property type="project" value="UniProtKB-KW"/>
</dbReference>
<dbReference type="GO" id="GO:0008270">
    <property type="term" value="F:zinc ion binding"/>
    <property type="evidence" value="ECO:0007669"/>
    <property type="project" value="UniProtKB-UniRule"/>
</dbReference>
<dbReference type="GO" id="GO:0045892">
    <property type="term" value="P:negative regulation of DNA-templated transcription"/>
    <property type="evidence" value="ECO:0007669"/>
    <property type="project" value="UniProtKB-UniRule"/>
</dbReference>
<dbReference type="HAMAP" id="MF_00440">
    <property type="entry name" value="NrdR"/>
    <property type="match status" value="1"/>
</dbReference>
<dbReference type="InterPro" id="IPR005144">
    <property type="entry name" value="ATP-cone_dom"/>
</dbReference>
<dbReference type="InterPro" id="IPR055173">
    <property type="entry name" value="NrdR-like_N"/>
</dbReference>
<dbReference type="InterPro" id="IPR003796">
    <property type="entry name" value="RNR_NrdR-like"/>
</dbReference>
<dbReference type="NCBIfam" id="TIGR00244">
    <property type="entry name" value="transcriptional regulator NrdR"/>
    <property type="match status" value="1"/>
</dbReference>
<dbReference type="PANTHER" id="PTHR30455">
    <property type="entry name" value="TRANSCRIPTIONAL REPRESSOR NRDR"/>
    <property type="match status" value="1"/>
</dbReference>
<dbReference type="PANTHER" id="PTHR30455:SF2">
    <property type="entry name" value="TRANSCRIPTIONAL REPRESSOR NRDR"/>
    <property type="match status" value="1"/>
</dbReference>
<dbReference type="Pfam" id="PF03477">
    <property type="entry name" value="ATP-cone"/>
    <property type="match status" value="1"/>
</dbReference>
<dbReference type="Pfam" id="PF22811">
    <property type="entry name" value="Zn_ribbon_NrdR"/>
    <property type="match status" value="1"/>
</dbReference>
<dbReference type="PROSITE" id="PS51161">
    <property type="entry name" value="ATP_CONE"/>
    <property type="match status" value="1"/>
</dbReference>
<evidence type="ECO:0000255" key="1">
    <source>
        <dbReference type="HAMAP-Rule" id="MF_00440"/>
    </source>
</evidence>
<keyword id="KW-0067">ATP-binding</keyword>
<keyword id="KW-0238">DNA-binding</keyword>
<keyword id="KW-0479">Metal-binding</keyword>
<keyword id="KW-0547">Nucleotide-binding</keyword>
<keyword id="KW-0678">Repressor</keyword>
<keyword id="KW-0804">Transcription</keyword>
<keyword id="KW-0805">Transcription regulation</keyword>
<keyword id="KW-0862">Zinc</keyword>
<keyword id="KW-0863">Zinc-finger</keyword>
<gene>
    <name evidence="1" type="primary">nrdR</name>
    <name type="ordered locus">Acid_0795</name>
</gene>
<sequence>MKCPFCNHLHDKVVDSRESKEGDAIRRRRECLECTRRYTTYERIDEVPYMVVKKDGRREKFDRQKVLGGLLKACEKRPVSMAKLSELVNRVEYKVSDSPDREISTIDIGEYLMENLRELDKIAYVRFASVYRDFQDEQAFFNELKHLMRQKMS</sequence>
<feature type="chain" id="PRO_1000080834" description="Transcriptional repressor NrdR">
    <location>
        <begin position="1"/>
        <end position="153"/>
    </location>
</feature>
<feature type="domain" description="ATP-cone" evidence="1">
    <location>
        <begin position="49"/>
        <end position="139"/>
    </location>
</feature>
<feature type="zinc finger region" evidence="1">
    <location>
        <begin position="3"/>
        <end position="34"/>
    </location>
</feature>
<protein>
    <recommendedName>
        <fullName evidence="1">Transcriptional repressor NrdR</fullName>
    </recommendedName>
</protein>
<organism>
    <name type="scientific">Solibacter usitatus (strain Ellin6076)</name>
    <dbReference type="NCBI Taxonomy" id="234267"/>
    <lineage>
        <taxon>Bacteria</taxon>
        <taxon>Pseudomonadati</taxon>
        <taxon>Acidobacteriota</taxon>
        <taxon>Terriglobia</taxon>
        <taxon>Bryobacterales</taxon>
        <taxon>Solibacteraceae</taxon>
        <taxon>Candidatus Solibacter</taxon>
    </lineage>
</organism>